<keyword id="KW-0067">ATP-binding</keyword>
<keyword id="KW-0436">Ligase</keyword>
<keyword id="KW-0460">Magnesium</keyword>
<keyword id="KW-0479">Metal-binding</keyword>
<keyword id="KW-0547">Nucleotide-binding</keyword>
<keyword id="KW-0816">Tricarboxylic acid cycle</keyword>
<name>SUCC_NAUPA</name>
<feature type="chain" id="PRO_1000197710" description="Succinate--CoA ligase [ADP-forming] subunit beta">
    <location>
        <begin position="1"/>
        <end position="390"/>
    </location>
</feature>
<feature type="domain" description="ATP-grasp" evidence="1">
    <location>
        <begin position="9"/>
        <end position="244"/>
    </location>
</feature>
<feature type="binding site" evidence="1">
    <location>
        <position position="46"/>
    </location>
    <ligand>
        <name>ATP</name>
        <dbReference type="ChEBI" id="CHEBI:30616"/>
    </ligand>
</feature>
<feature type="binding site" evidence="1">
    <location>
        <begin position="53"/>
        <end position="55"/>
    </location>
    <ligand>
        <name>ATP</name>
        <dbReference type="ChEBI" id="CHEBI:30616"/>
    </ligand>
</feature>
<feature type="binding site" evidence="1">
    <location>
        <position position="99"/>
    </location>
    <ligand>
        <name>ATP</name>
        <dbReference type="ChEBI" id="CHEBI:30616"/>
    </ligand>
</feature>
<feature type="binding site" evidence="1">
    <location>
        <position position="102"/>
    </location>
    <ligand>
        <name>ATP</name>
        <dbReference type="ChEBI" id="CHEBI:30616"/>
    </ligand>
</feature>
<feature type="binding site" evidence="1">
    <location>
        <position position="107"/>
    </location>
    <ligand>
        <name>ATP</name>
        <dbReference type="ChEBI" id="CHEBI:30616"/>
    </ligand>
</feature>
<feature type="binding site" evidence="1">
    <location>
        <position position="199"/>
    </location>
    <ligand>
        <name>Mg(2+)</name>
        <dbReference type="ChEBI" id="CHEBI:18420"/>
    </ligand>
</feature>
<feature type="binding site" evidence="1">
    <location>
        <position position="213"/>
    </location>
    <ligand>
        <name>Mg(2+)</name>
        <dbReference type="ChEBI" id="CHEBI:18420"/>
    </ligand>
</feature>
<feature type="binding site" evidence="1">
    <location>
        <position position="264"/>
    </location>
    <ligand>
        <name>substrate</name>
        <note>ligand shared with subunit alpha</note>
    </ligand>
</feature>
<feature type="binding site" evidence="1">
    <location>
        <begin position="321"/>
        <end position="323"/>
    </location>
    <ligand>
        <name>substrate</name>
        <note>ligand shared with subunit alpha</note>
    </ligand>
</feature>
<organism>
    <name type="scientific">Nautilia profundicola (strain ATCC BAA-1463 / DSM 18972 / AmH)</name>
    <dbReference type="NCBI Taxonomy" id="598659"/>
    <lineage>
        <taxon>Bacteria</taxon>
        <taxon>Pseudomonadati</taxon>
        <taxon>Campylobacterota</taxon>
        <taxon>Epsilonproteobacteria</taxon>
        <taxon>Nautiliales</taxon>
        <taxon>Nautiliaceae</taxon>
        <taxon>Nautilia</taxon>
    </lineage>
</organism>
<sequence length="390" mass="42253">MNIHEYQAKEIFRKYGVPTPRGGVAFTGPEARRVAEELGGNLWVVKAQIHAGGRGKAGGVKLAKSLDEVEKIAEEMLGMTLVTHQTGPEGKVVKKVYIEEGADIKDELYLGMVLDRALEMPVMMASTEGGMEIEEVAEKTPEKIIKVAIDPAIGFQPFHARKLAFGLGLPKDEQREFIKFASALYNVYMDNDAEMIEINPLIKTGDGKFLALDAKMGFDDNALYKHPEIAEMRDLDEEEPTEVEAKKYGLSYIKLDGNVGCMVNGAGLAMATMDIIKHEGGEPANFLDVGGGANPDTVAKGFEIILSDPNVKSIFVNIFGGIVRCDRIANGILQATEKVEVNVPVIVRLDGTNAEEAAEILRNANIKNIIPAENLKDGAKKAVAAAKGEL</sequence>
<gene>
    <name evidence="1" type="primary">sucC</name>
    <name type="ordered locus">NAMH_1231</name>
</gene>
<protein>
    <recommendedName>
        <fullName evidence="1">Succinate--CoA ligase [ADP-forming] subunit beta</fullName>
        <ecNumber evidence="1">6.2.1.5</ecNumber>
    </recommendedName>
    <alternativeName>
        <fullName evidence="1">Succinyl-CoA synthetase subunit beta</fullName>
        <shortName evidence="1">SCS-beta</shortName>
    </alternativeName>
</protein>
<accession>B9L5I6</accession>
<dbReference type="EC" id="6.2.1.5" evidence="1"/>
<dbReference type="EMBL" id="CP001279">
    <property type="protein sequence ID" value="ACM93699.1"/>
    <property type="molecule type" value="Genomic_DNA"/>
</dbReference>
<dbReference type="RefSeq" id="WP_015902751.1">
    <property type="nucleotide sequence ID" value="NC_012115.1"/>
</dbReference>
<dbReference type="SMR" id="B9L5I6"/>
<dbReference type="STRING" id="598659.NAMH_1231"/>
<dbReference type="KEGG" id="nam:NAMH_1231"/>
<dbReference type="eggNOG" id="COG0045">
    <property type="taxonomic scope" value="Bacteria"/>
</dbReference>
<dbReference type="HOGENOM" id="CLU_037430_0_2_7"/>
<dbReference type="OrthoDB" id="9802602at2"/>
<dbReference type="UniPathway" id="UPA00223">
    <property type="reaction ID" value="UER00999"/>
</dbReference>
<dbReference type="Proteomes" id="UP000000448">
    <property type="component" value="Chromosome"/>
</dbReference>
<dbReference type="GO" id="GO:0005829">
    <property type="term" value="C:cytosol"/>
    <property type="evidence" value="ECO:0007669"/>
    <property type="project" value="TreeGrafter"/>
</dbReference>
<dbReference type="GO" id="GO:0042709">
    <property type="term" value="C:succinate-CoA ligase complex"/>
    <property type="evidence" value="ECO:0007669"/>
    <property type="project" value="TreeGrafter"/>
</dbReference>
<dbReference type="GO" id="GO:0005524">
    <property type="term" value="F:ATP binding"/>
    <property type="evidence" value="ECO:0007669"/>
    <property type="project" value="UniProtKB-UniRule"/>
</dbReference>
<dbReference type="GO" id="GO:0000287">
    <property type="term" value="F:magnesium ion binding"/>
    <property type="evidence" value="ECO:0007669"/>
    <property type="project" value="UniProtKB-UniRule"/>
</dbReference>
<dbReference type="GO" id="GO:0004775">
    <property type="term" value="F:succinate-CoA ligase (ADP-forming) activity"/>
    <property type="evidence" value="ECO:0007669"/>
    <property type="project" value="UniProtKB-UniRule"/>
</dbReference>
<dbReference type="GO" id="GO:0004776">
    <property type="term" value="F:succinate-CoA ligase (GDP-forming) activity"/>
    <property type="evidence" value="ECO:0007669"/>
    <property type="project" value="RHEA"/>
</dbReference>
<dbReference type="GO" id="GO:0006104">
    <property type="term" value="P:succinyl-CoA metabolic process"/>
    <property type="evidence" value="ECO:0007669"/>
    <property type="project" value="TreeGrafter"/>
</dbReference>
<dbReference type="GO" id="GO:0006099">
    <property type="term" value="P:tricarboxylic acid cycle"/>
    <property type="evidence" value="ECO:0007669"/>
    <property type="project" value="UniProtKB-UniRule"/>
</dbReference>
<dbReference type="FunFam" id="3.30.1490.20:FF:000002">
    <property type="entry name" value="Succinate--CoA ligase [ADP-forming] subunit beta"/>
    <property type="match status" value="1"/>
</dbReference>
<dbReference type="FunFam" id="3.30.470.20:FF:000002">
    <property type="entry name" value="Succinate--CoA ligase [ADP-forming] subunit beta"/>
    <property type="match status" value="1"/>
</dbReference>
<dbReference type="FunFam" id="3.40.50.261:FF:000001">
    <property type="entry name" value="Succinate--CoA ligase [ADP-forming] subunit beta"/>
    <property type="match status" value="1"/>
</dbReference>
<dbReference type="Gene3D" id="3.30.1490.20">
    <property type="entry name" value="ATP-grasp fold, A domain"/>
    <property type="match status" value="1"/>
</dbReference>
<dbReference type="Gene3D" id="3.30.470.20">
    <property type="entry name" value="ATP-grasp fold, B domain"/>
    <property type="match status" value="1"/>
</dbReference>
<dbReference type="Gene3D" id="3.40.50.261">
    <property type="entry name" value="Succinyl-CoA synthetase domains"/>
    <property type="match status" value="1"/>
</dbReference>
<dbReference type="HAMAP" id="MF_00558">
    <property type="entry name" value="Succ_CoA_beta"/>
    <property type="match status" value="1"/>
</dbReference>
<dbReference type="InterPro" id="IPR011761">
    <property type="entry name" value="ATP-grasp"/>
</dbReference>
<dbReference type="InterPro" id="IPR013650">
    <property type="entry name" value="ATP-grasp_succ-CoA_synth-type"/>
</dbReference>
<dbReference type="InterPro" id="IPR013815">
    <property type="entry name" value="ATP_grasp_subdomain_1"/>
</dbReference>
<dbReference type="InterPro" id="IPR017866">
    <property type="entry name" value="Succ-CoA_synthase_bsu_CS"/>
</dbReference>
<dbReference type="InterPro" id="IPR005811">
    <property type="entry name" value="SUCC_ACL_C"/>
</dbReference>
<dbReference type="InterPro" id="IPR005809">
    <property type="entry name" value="Succ_CoA_ligase-like_bsu"/>
</dbReference>
<dbReference type="InterPro" id="IPR016102">
    <property type="entry name" value="Succinyl-CoA_synth-like"/>
</dbReference>
<dbReference type="NCBIfam" id="NF001913">
    <property type="entry name" value="PRK00696.1"/>
    <property type="match status" value="1"/>
</dbReference>
<dbReference type="NCBIfam" id="TIGR01016">
    <property type="entry name" value="sucCoAbeta"/>
    <property type="match status" value="1"/>
</dbReference>
<dbReference type="PANTHER" id="PTHR11815:SF10">
    <property type="entry name" value="SUCCINATE--COA LIGASE [GDP-FORMING] SUBUNIT BETA, MITOCHONDRIAL"/>
    <property type="match status" value="1"/>
</dbReference>
<dbReference type="PANTHER" id="PTHR11815">
    <property type="entry name" value="SUCCINYL-COA SYNTHETASE BETA CHAIN"/>
    <property type="match status" value="1"/>
</dbReference>
<dbReference type="Pfam" id="PF08442">
    <property type="entry name" value="ATP-grasp_2"/>
    <property type="match status" value="1"/>
</dbReference>
<dbReference type="Pfam" id="PF00549">
    <property type="entry name" value="Ligase_CoA"/>
    <property type="match status" value="1"/>
</dbReference>
<dbReference type="PIRSF" id="PIRSF001554">
    <property type="entry name" value="SucCS_beta"/>
    <property type="match status" value="1"/>
</dbReference>
<dbReference type="SUPFAM" id="SSF56059">
    <property type="entry name" value="Glutathione synthetase ATP-binding domain-like"/>
    <property type="match status" value="1"/>
</dbReference>
<dbReference type="SUPFAM" id="SSF52210">
    <property type="entry name" value="Succinyl-CoA synthetase domains"/>
    <property type="match status" value="1"/>
</dbReference>
<dbReference type="PROSITE" id="PS50975">
    <property type="entry name" value="ATP_GRASP"/>
    <property type="match status" value="1"/>
</dbReference>
<dbReference type="PROSITE" id="PS01217">
    <property type="entry name" value="SUCCINYL_COA_LIG_3"/>
    <property type="match status" value="1"/>
</dbReference>
<comment type="function">
    <text evidence="1">Succinyl-CoA synthetase functions in the citric acid cycle (TCA), coupling the hydrolysis of succinyl-CoA to the synthesis of either ATP or GTP and thus represents the only step of substrate-level phosphorylation in the TCA. The beta subunit provides nucleotide specificity of the enzyme and binds the substrate succinate, while the binding sites for coenzyme A and phosphate are found in the alpha subunit.</text>
</comment>
<comment type="catalytic activity">
    <reaction evidence="1">
        <text>succinate + ATP + CoA = succinyl-CoA + ADP + phosphate</text>
        <dbReference type="Rhea" id="RHEA:17661"/>
        <dbReference type="ChEBI" id="CHEBI:30031"/>
        <dbReference type="ChEBI" id="CHEBI:30616"/>
        <dbReference type="ChEBI" id="CHEBI:43474"/>
        <dbReference type="ChEBI" id="CHEBI:57287"/>
        <dbReference type="ChEBI" id="CHEBI:57292"/>
        <dbReference type="ChEBI" id="CHEBI:456216"/>
        <dbReference type="EC" id="6.2.1.5"/>
    </reaction>
    <physiologicalReaction direction="right-to-left" evidence="1">
        <dbReference type="Rhea" id="RHEA:17663"/>
    </physiologicalReaction>
</comment>
<comment type="catalytic activity">
    <reaction evidence="1">
        <text>GTP + succinate + CoA = succinyl-CoA + GDP + phosphate</text>
        <dbReference type="Rhea" id="RHEA:22120"/>
        <dbReference type="ChEBI" id="CHEBI:30031"/>
        <dbReference type="ChEBI" id="CHEBI:37565"/>
        <dbReference type="ChEBI" id="CHEBI:43474"/>
        <dbReference type="ChEBI" id="CHEBI:57287"/>
        <dbReference type="ChEBI" id="CHEBI:57292"/>
        <dbReference type="ChEBI" id="CHEBI:58189"/>
    </reaction>
    <physiologicalReaction direction="right-to-left" evidence="1">
        <dbReference type="Rhea" id="RHEA:22122"/>
    </physiologicalReaction>
</comment>
<comment type="cofactor">
    <cofactor evidence="1">
        <name>Mg(2+)</name>
        <dbReference type="ChEBI" id="CHEBI:18420"/>
    </cofactor>
    <text evidence="1">Binds 1 Mg(2+) ion per subunit.</text>
</comment>
<comment type="pathway">
    <text evidence="1">Carbohydrate metabolism; tricarboxylic acid cycle; succinate from succinyl-CoA (ligase route): step 1/1.</text>
</comment>
<comment type="subunit">
    <text evidence="1">Heterotetramer of two alpha and two beta subunits.</text>
</comment>
<comment type="similarity">
    <text evidence="1">Belongs to the succinate/malate CoA ligase beta subunit family.</text>
</comment>
<evidence type="ECO:0000255" key="1">
    <source>
        <dbReference type="HAMAP-Rule" id="MF_00558"/>
    </source>
</evidence>
<proteinExistence type="inferred from homology"/>
<reference key="1">
    <citation type="journal article" date="2009" name="PLoS Genet.">
        <title>Adaptations to submarine hydrothermal environments exemplified by the genome of Nautilia profundicola.</title>
        <authorList>
            <person name="Campbell B.J."/>
            <person name="Smith J.L."/>
            <person name="Hanson T.E."/>
            <person name="Klotz M.G."/>
            <person name="Stein L.Y."/>
            <person name="Lee C.K."/>
            <person name="Wu D."/>
            <person name="Robinson J.M."/>
            <person name="Khouri H.M."/>
            <person name="Eisen J.A."/>
            <person name="Cary S.C."/>
        </authorList>
    </citation>
    <scope>NUCLEOTIDE SEQUENCE [LARGE SCALE GENOMIC DNA]</scope>
    <source>
        <strain>ATCC BAA-1463 / DSM 18972 / AmH</strain>
    </source>
</reference>